<keyword id="KW-0050">Antiport</keyword>
<keyword id="KW-1003">Cell membrane</keyword>
<keyword id="KW-0406">Ion transport</keyword>
<keyword id="KW-0472">Membrane</keyword>
<keyword id="KW-1185">Reference proteome</keyword>
<keyword id="KW-0915">Sodium</keyword>
<keyword id="KW-0739">Sodium transport</keyword>
<keyword id="KW-0812">Transmembrane</keyword>
<keyword id="KW-1133">Transmembrane helix</keyword>
<keyword id="KW-0813">Transport</keyword>
<evidence type="ECO:0000255" key="1">
    <source>
        <dbReference type="HAMAP-Rule" id="MF_01844"/>
    </source>
</evidence>
<gene>
    <name evidence="1" type="primary">nhaA</name>
    <name type="ordered locus">SAV_4598</name>
</gene>
<sequence length="466" mass="49235">MAAPRTSTRKFLGRLSLPERNFVAEALRTETVGGVLLLLAAITALIWANVPALHHSYESVSHFHFGPAPLGLDLSVQHWAADGLLAVFFFVAGIELKRELVAGDLKDPKAAALPVAAALCGMAVPALVYTLTNLTGGGSLRGWAVPTATDIAFALAVLAVIGTSLPSALRAFLLTLAVVDDLFAILIIAVFFTADLNFAALAGAVIGLAVFWLLLRKGVRGWYVYVPLALVIWGLMYNSGIHATIAGVAMGLMLRCHRHQGEEHAPGEHIEHLVRPLSAGLAVPLFALFSAGVVISGGALGDVFTRPETLGVVLGLVVGKAIGIFGGTWLTARFTRASLSDDLAWPDVFAVASLAGIGFTVSLLIGELAFDGDPVLTDEVKAAVLTGSLLAALIATTLLKLRNAKYRALCEDEERDEDSDGIPDIYEQDNPAYHLRMAEIYERKAAEHRRLAEVTGGAGAENDGPA</sequence>
<dbReference type="EMBL" id="BA000030">
    <property type="protein sequence ID" value="BAC72310.1"/>
    <property type="molecule type" value="Genomic_DNA"/>
</dbReference>
<dbReference type="RefSeq" id="WP_010986022.1">
    <property type="nucleotide sequence ID" value="NZ_JZJK01000062.1"/>
</dbReference>
<dbReference type="SMR" id="Q82EL6"/>
<dbReference type="GeneID" id="41541680"/>
<dbReference type="KEGG" id="sma:SAVERM_4598"/>
<dbReference type="eggNOG" id="COG3004">
    <property type="taxonomic scope" value="Bacteria"/>
</dbReference>
<dbReference type="HOGENOM" id="CLU_015803_0_0_11"/>
<dbReference type="OrthoDB" id="117402at2"/>
<dbReference type="Proteomes" id="UP000000428">
    <property type="component" value="Chromosome"/>
</dbReference>
<dbReference type="GO" id="GO:0005886">
    <property type="term" value="C:plasma membrane"/>
    <property type="evidence" value="ECO:0007669"/>
    <property type="project" value="UniProtKB-SubCell"/>
</dbReference>
<dbReference type="GO" id="GO:0015385">
    <property type="term" value="F:sodium:proton antiporter activity"/>
    <property type="evidence" value="ECO:0007669"/>
    <property type="project" value="TreeGrafter"/>
</dbReference>
<dbReference type="GO" id="GO:0006885">
    <property type="term" value="P:regulation of pH"/>
    <property type="evidence" value="ECO:0007669"/>
    <property type="project" value="InterPro"/>
</dbReference>
<dbReference type="Gene3D" id="1.20.1530.10">
    <property type="entry name" value="Na+/H+ antiporter like domain"/>
    <property type="match status" value="1"/>
</dbReference>
<dbReference type="HAMAP" id="MF_01844">
    <property type="entry name" value="NhaA"/>
    <property type="match status" value="1"/>
</dbReference>
<dbReference type="InterPro" id="IPR023171">
    <property type="entry name" value="Na/H_antiporter_dom_sf"/>
</dbReference>
<dbReference type="InterPro" id="IPR004670">
    <property type="entry name" value="NhaA"/>
</dbReference>
<dbReference type="NCBIfam" id="TIGR00773">
    <property type="entry name" value="NhaA"/>
    <property type="match status" value="1"/>
</dbReference>
<dbReference type="PANTHER" id="PTHR30341:SF0">
    <property type="entry name" value="NA(+)_H(+) ANTIPORTER NHAA"/>
    <property type="match status" value="1"/>
</dbReference>
<dbReference type="PANTHER" id="PTHR30341">
    <property type="entry name" value="SODIUM ION/PROTON ANTIPORTER NHAA-RELATED"/>
    <property type="match status" value="1"/>
</dbReference>
<dbReference type="Pfam" id="PF06965">
    <property type="entry name" value="Na_H_antiport_1"/>
    <property type="match status" value="1"/>
</dbReference>
<comment type="function">
    <text evidence="1">Na(+)/H(+) antiporter that extrudes sodium in exchange for external protons.</text>
</comment>
<comment type="catalytic activity">
    <reaction evidence="1">
        <text>Na(+)(in) + 2 H(+)(out) = Na(+)(out) + 2 H(+)(in)</text>
        <dbReference type="Rhea" id="RHEA:29251"/>
        <dbReference type="ChEBI" id="CHEBI:15378"/>
        <dbReference type="ChEBI" id="CHEBI:29101"/>
    </reaction>
    <physiologicalReaction direction="left-to-right" evidence="1">
        <dbReference type="Rhea" id="RHEA:29252"/>
    </physiologicalReaction>
</comment>
<comment type="subcellular location">
    <subcellularLocation>
        <location evidence="1">Cell membrane</location>
        <topology evidence="1">Multi-pass membrane protein</topology>
    </subcellularLocation>
</comment>
<comment type="similarity">
    <text evidence="1">Belongs to the NhaA Na(+)/H(+) (TC 2.A.33) antiporter family.</text>
</comment>
<protein>
    <recommendedName>
        <fullName evidence="1">Na(+)/H(+) antiporter NhaA</fullName>
    </recommendedName>
    <alternativeName>
        <fullName evidence="1">Sodium/proton antiporter NhaA</fullName>
    </alternativeName>
</protein>
<accession>Q82EL6</accession>
<reference key="1">
    <citation type="journal article" date="2001" name="Proc. Natl. Acad. Sci. U.S.A.">
        <title>Genome sequence of an industrial microorganism Streptomyces avermitilis: deducing the ability of producing secondary metabolites.</title>
        <authorList>
            <person name="Omura S."/>
            <person name="Ikeda H."/>
            <person name="Ishikawa J."/>
            <person name="Hanamoto A."/>
            <person name="Takahashi C."/>
            <person name="Shinose M."/>
            <person name="Takahashi Y."/>
            <person name="Horikawa H."/>
            <person name="Nakazawa H."/>
            <person name="Osonoe T."/>
            <person name="Kikuchi H."/>
            <person name="Shiba T."/>
            <person name="Sakaki Y."/>
            <person name="Hattori M."/>
        </authorList>
    </citation>
    <scope>NUCLEOTIDE SEQUENCE [LARGE SCALE GENOMIC DNA]</scope>
    <source>
        <strain>ATCC 31267 / DSM 46492 / JCM 5070 / NBRC 14893 / NCIMB 12804 / NRRL 8165 / MA-4680</strain>
    </source>
</reference>
<reference key="2">
    <citation type="journal article" date="2003" name="Nat. Biotechnol.">
        <title>Complete genome sequence and comparative analysis of the industrial microorganism Streptomyces avermitilis.</title>
        <authorList>
            <person name="Ikeda H."/>
            <person name="Ishikawa J."/>
            <person name="Hanamoto A."/>
            <person name="Shinose M."/>
            <person name="Kikuchi H."/>
            <person name="Shiba T."/>
            <person name="Sakaki Y."/>
            <person name="Hattori M."/>
            <person name="Omura S."/>
        </authorList>
    </citation>
    <scope>NUCLEOTIDE SEQUENCE [LARGE SCALE GENOMIC DNA]</scope>
    <source>
        <strain>ATCC 31267 / DSM 46492 / JCM 5070 / NBRC 14893 / NCIMB 12804 / NRRL 8165 / MA-4680</strain>
    </source>
</reference>
<proteinExistence type="inferred from homology"/>
<organism>
    <name type="scientific">Streptomyces avermitilis (strain ATCC 31267 / DSM 46492 / JCM 5070 / NBRC 14893 / NCIMB 12804 / NRRL 8165 / MA-4680)</name>
    <dbReference type="NCBI Taxonomy" id="227882"/>
    <lineage>
        <taxon>Bacteria</taxon>
        <taxon>Bacillati</taxon>
        <taxon>Actinomycetota</taxon>
        <taxon>Actinomycetes</taxon>
        <taxon>Kitasatosporales</taxon>
        <taxon>Streptomycetaceae</taxon>
        <taxon>Streptomyces</taxon>
    </lineage>
</organism>
<feature type="chain" id="PRO_0000334446" description="Na(+)/H(+) antiporter NhaA">
    <location>
        <begin position="1"/>
        <end position="466"/>
    </location>
</feature>
<feature type="transmembrane region" description="Helical" evidence="1">
    <location>
        <begin position="32"/>
        <end position="52"/>
    </location>
</feature>
<feature type="transmembrane region" description="Helical" evidence="1">
    <location>
        <begin position="74"/>
        <end position="94"/>
    </location>
</feature>
<feature type="transmembrane region" description="Helical" evidence="1">
    <location>
        <begin position="111"/>
        <end position="131"/>
    </location>
</feature>
<feature type="transmembrane region" description="Helical" evidence="1">
    <location>
        <begin position="142"/>
        <end position="162"/>
    </location>
</feature>
<feature type="transmembrane region" description="Helical" evidence="1">
    <location>
        <begin position="172"/>
        <end position="192"/>
    </location>
</feature>
<feature type="transmembrane region" description="Helical" evidence="1">
    <location>
        <begin position="195"/>
        <end position="215"/>
    </location>
</feature>
<feature type="transmembrane region" description="Helical" evidence="1">
    <location>
        <begin position="221"/>
        <end position="241"/>
    </location>
</feature>
<feature type="transmembrane region" description="Helical" evidence="1">
    <location>
        <begin position="280"/>
        <end position="300"/>
    </location>
</feature>
<feature type="transmembrane region" description="Helical" evidence="1">
    <location>
        <begin position="310"/>
        <end position="330"/>
    </location>
</feature>
<feature type="transmembrane region" description="Helical" evidence="1">
    <location>
        <begin position="348"/>
        <end position="368"/>
    </location>
</feature>
<feature type="transmembrane region" description="Helical" evidence="1">
    <location>
        <begin position="379"/>
        <end position="399"/>
    </location>
</feature>
<name>NHAA_STRAW</name>